<feature type="chain" id="PRO_0000115888" description="Tripartite terminase subunit 1">
    <location>
        <begin position="1"/>
        <end position="724"/>
    </location>
</feature>
<feature type="zinc finger region" description="C3H1-type" evidence="1">
    <location>
        <begin position="175"/>
        <end position="203"/>
    </location>
</feature>
<feature type="region of interest" description="Disordered" evidence="2">
    <location>
        <begin position="410"/>
        <end position="445"/>
    </location>
</feature>
<feature type="compositionally biased region" description="Gly residues" evidence="2">
    <location>
        <begin position="419"/>
        <end position="430"/>
    </location>
</feature>
<feature type="binding site" evidence="1">
    <location>
        <begin position="652"/>
        <end position="659"/>
    </location>
    <ligand>
        <name>ATP</name>
        <dbReference type="ChEBI" id="CHEBI:30616"/>
    </ligand>
</feature>
<proteinExistence type="evidence at protein level"/>
<reference key="1">
    <citation type="journal article" date="1989" name="Nucleic Acids Res.">
        <title>The nucleotide sequence of a pseudorabies virus gene similar to ICP18.5 of herpes simplex virus type 1.</title>
        <authorList>
            <person name="Pederson N.E."/>
            <person name="Enquist L.W."/>
        </authorList>
    </citation>
    <scope>NUCLEOTIDE SEQUENCE [GENOMIC DNA]</scope>
</reference>
<reference key="2">
    <citation type="journal article" date="1997" name="J. Virol.">
        <title>The pseudorabies virus UL28 protein enters the nucleus after coexpression with the herpes simplex virus UL15 protein.</title>
        <authorList>
            <person name="Koslowski K.M."/>
            <person name="Shaver P.R."/>
            <person name="Wang X.Y."/>
            <person name="Tenney D.J."/>
            <person name="Pederson N.E."/>
        </authorList>
    </citation>
    <scope>INTERACTION WITH UL15</scope>
    <scope>SUBCELLULAR LOCATION</scope>
</reference>
<organism>
    <name type="scientific">Suid herpesvirus 1 (strain Indiana-Funkhauser / Becker)</name>
    <name type="common">SuHV-1</name>
    <name type="synonym">Pseudorabies virus (strain Indiana-Funkhauser / Becker)</name>
    <dbReference type="NCBI Taxonomy" id="31523"/>
    <lineage>
        <taxon>Viruses</taxon>
        <taxon>Duplodnaviria</taxon>
        <taxon>Heunggongvirae</taxon>
        <taxon>Peploviricota</taxon>
        <taxon>Herviviricetes</taxon>
        <taxon>Herpesvirales</taxon>
        <taxon>Orthoherpesviridae</taxon>
        <taxon>Alphaherpesvirinae</taxon>
        <taxon>Varicellovirus</taxon>
        <taxon>Varicellovirus suidalpha1</taxon>
        <taxon>Suid herpesvirus 1</taxon>
    </lineage>
</organism>
<name>TRM1_SUHVF</name>
<dbReference type="EMBL" id="X14573">
    <property type="protein sequence ID" value="CAA32712.1"/>
    <property type="molecule type" value="Genomic_DNA"/>
</dbReference>
<dbReference type="PIR" id="A33779">
    <property type="entry name" value="WMBEPR"/>
</dbReference>
<dbReference type="SMR" id="P11871"/>
<dbReference type="KEGG" id="vg:2952557"/>
<dbReference type="GO" id="GO:0042025">
    <property type="term" value="C:host cell nucleus"/>
    <property type="evidence" value="ECO:0007669"/>
    <property type="project" value="UniProtKB-SubCell"/>
</dbReference>
<dbReference type="GO" id="GO:0005524">
    <property type="term" value="F:ATP binding"/>
    <property type="evidence" value="ECO:0007669"/>
    <property type="project" value="UniProtKB-KW"/>
</dbReference>
<dbReference type="GO" id="GO:0008270">
    <property type="term" value="F:zinc ion binding"/>
    <property type="evidence" value="ECO:0007669"/>
    <property type="project" value="UniProtKB-KW"/>
</dbReference>
<dbReference type="GO" id="GO:0019073">
    <property type="term" value="P:viral DNA genome packaging"/>
    <property type="evidence" value="ECO:0007669"/>
    <property type="project" value="InterPro"/>
</dbReference>
<dbReference type="HAMAP" id="MF_04014">
    <property type="entry name" value="HSV_TRM1"/>
    <property type="match status" value="1"/>
</dbReference>
<dbReference type="InterPro" id="IPR000501">
    <property type="entry name" value="UL28/UL56"/>
</dbReference>
<dbReference type="Pfam" id="PF01366">
    <property type="entry name" value="PRTP"/>
    <property type="match status" value="1"/>
</dbReference>
<accession>P11871</accession>
<gene>
    <name evidence="1" type="primary">TRM1</name>
</gene>
<sequence length="724" mass="78882">MAERRLVAVLGQVQTYVFQLEMLKRCDPAVVRELAPRVKLNALMCRYLARRLPLEAQTTPLTCALRLALAYARAEGDRVLGALAAAGDDAEAYFERTMGGACRFHARVALDTYGGRVETELQFLHDAENLLKQLNYCHLITPHAVDLSAVDEFLARTIGGGLVVPPELYDPAQPCAVCFEELCVTANQGEATHRRLLGCVCDHLTRQLAVRVDPEDVAKNLPHVHGLDEARRGRALAALAAVDAAEAREAEAASTAAAGAEAGDAGETARRRADALLDAHDVFRPASRRLYAVSELQFWLASTNQAVRALDLFTHNLDDLERRERRAEVRAAAVELALFGRRPEHFDRARAARELDIIDGLLVGGCAASPDERLEALIRACYDHHMSTPMLRMLDPDRANRDALERLLEGGDDADADGGAAGGADAGDGGVGDEDGPGAPPPADAVAWADLPAAALRDAERRRRLYADRLSRRSAASLAQCVREQRRELEKTLRVNVYGDALLHTYVAVAAGFRARRAFCEAAARAGTVVDERETGCFDAHSFMKATVQRHPVDAALLPAVTRKFFELVNGPLFAHDTHAFAQPPNTALYFAVENVGLLPHLKEELARFMVARDWCVSEFRGFYRFQTAGVTATQRQAWRYIRELVLAVAVFRSVFHCGDVEVLRADRFAGRDGLYLTYEASCPLVAVFGAGPGGIGPGTTAVLASDVFGLLHTTLQLRGAPSR</sequence>
<organismHost>
    <name type="scientific">Sus scrofa</name>
    <name type="common">Pig</name>
    <dbReference type="NCBI Taxonomy" id="9823"/>
</organismHost>
<comment type="function">
    <text evidence="1">Component of the molecular motor that translocates viral genomic DNA in empty capsid during DNA packaging. Forms a tripartite terminase complex together with TRM2 and TRM3 in the host cytoplasm. Once the complex reaches the host nucleus, it interacts with the capsid portal vertex. This portal forms a ring in which genomic DNA is translocated into the capsid. TRM1 carries an endonuclease activity that plays an important role for the cleavage of concatemeric viral DNA into unit length genomes.</text>
</comment>
<comment type="subunit">
    <text evidence="1">Associates with TRM2 and TRM3 to form the tripartite terminase complex. Interacts with portal protein.</text>
</comment>
<comment type="subcellular location">
    <subcellularLocation>
        <location evidence="1 3">Host nucleus</location>
    </subcellularLocation>
    <text evidence="1">Found associated with the external surface of the viral capsid during assembly and DNA packaging, but seems absent in extracellular mature virions.</text>
</comment>
<comment type="similarity">
    <text evidence="1">Belongs to the herpesviridae TRM1 protein family.</text>
</comment>
<protein>
    <recommendedName>
        <fullName evidence="1">Tripartite terminase subunit 1</fullName>
    </recommendedName>
</protein>
<keyword id="KW-0067">ATP-binding</keyword>
<keyword id="KW-1048">Host nucleus</keyword>
<keyword id="KW-0426">Late protein</keyword>
<keyword id="KW-0479">Metal-binding</keyword>
<keyword id="KW-0547">Nucleotide-binding</keyword>
<keyword id="KW-0231">Viral genome packaging</keyword>
<keyword id="KW-1188">Viral release from host cell</keyword>
<keyword id="KW-0862">Zinc</keyword>
<keyword id="KW-0863">Zinc-finger</keyword>
<evidence type="ECO:0000255" key="1">
    <source>
        <dbReference type="HAMAP-Rule" id="MF_04014"/>
    </source>
</evidence>
<evidence type="ECO:0000256" key="2">
    <source>
        <dbReference type="SAM" id="MobiDB-lite"/>
    </source>
</evidence>
<evidence type="ECO:0000269" key="3">
    <source>
    </source>
</evidence>